<comment type="subcellular location">
    <subcellularLocation>
        <location evidence="2">Cell membrane</location>
        <topology evidence="2">Multi-pass membrane protein</topology>
    </subcellularLocation>
</comment>
<comment type="similarity">
    <text evidence="2">To A.aeolicus AQ_155.</text>
</comment>
<gene>
    <name type="ordered locus">RP382</name>
</gene>
<protein>
    <recommendedName>
        <fullName>Uncharacterized protein RP382</fullName>
    </recommendedName>
</protein>
<proteinExistence type="predicted"/>
<accession>Q9ZDE9</accession>
<keyword id="KW-1003">Cell membrane</keyword>
<keyword id="KW-0472">Membrane</keyword>
<keyword id="KW-1185">Reference proteome</keyword>
<keyword id="KW-0812">Transmembrane</keyword>
<keyword id="KW-1133">Transmembrane helix</keyword>
<organism>
    <name type="scientific">Rickettsia prowazekii (strain Madrid E)</name>
    <dbReference type="NCBI Taxonomy" id="272947"/>
    <lineage>
        <taxon>Bacteria</taxon>
        <taxon>Pseudomonadati</taxon>
        <taxon>Pseudomonadota</taxon>
        <taxon>Alphaproteobacteria</taxon>
        <taxon>Rickettsiales</taxon>
        <taxon>Rickettsiaceae</taxon>
        <taxon>Rickettsieae</taxon>
        <taxon>Rickettsia</taxon>
        <taxon>typhus group</taxon>
    </lineage>
</organism>
<reference key="1">
    <citation type="journal article" date="1998" name="Nature">
        <title>The genome sequence of Rickettsia prowazekii and the origin of mitochondria.</title>
        <authorList>
            <person name="Andersson S.G.E."/>
            <person name="Zomorodipour A."/>
            <person name="Andersson J.O."/>
            <person name="Sicheritz-Ponten T."/>
            <person name="Alsmark U.C.M."/>
            <person name="Podowski R.M."/>
            <person name="Naeslund A.K."/>
            <person name="Eriksson A.-S."/>
            <person name="Winkler H.H."/>
            <person name="Kurland C.G."/>
        </authorList>
    </citation>
    <scope>NUCLEOTIDE SEQUENCE [LARGE SCALE GENOMIC DNA]</scope>
    <source>
        <strain>Madrid E</strain>
    </source>
</reference>
<evidence type="ECO:0000255" key="1"/>
<evidence type="ECO:0000305" key="2"/>
<sequence>MHSTNKSHNNSLANAWLKLGIISLGLGGLYSIILVVLRTPQLSSFFLNQRIFKSALIIHVNLSILIWLLSITASVWGNETSLRLVKRRGIFIPFGLLREIVTFYTFDRNDVLYIYPKLAFFATLLIAISPLAGYNTVTNNYIPMLANIVFILGLSLFGVTLLLYAINILYLFDWMKLNNLVNVTVFSTIIMFILSFVCFGWSYKSLQKIIQIIPIEIEFYYELLFWSGGHLLQFIYTQILIFIWVSLLRTITVRELKFQTFYLFILYLNFVFSILILFGHISYDIIDIAFKEFYTDHMKYLGGIAPILCLVGMVVELVLMSYRDKLVLLIYRLSTKSSKIKKDCITLSNHRTHSIIKTILLCSITLFLLGGLIAININDINLVIPAHYHGSIVGISIACMGYSYQTIIPLMDHDIHKTTKQYLITLSINWIKFAIYLLTFGQILHILGLAFSGIYGVMRKDPNSIVPMSSKLLMGMMGIGGLIAIVGGLMFVYICGKTMFFLKGMKLEYE</sequence>
<name>Y382_RICPR</name>
<feature type="chain" id="PRO_0000101360" description="Uncharacterized protein RP382">
    <location>
        <begin position="1"/>
        <end position="510"/>
    </location>
</feature>
<feature type="transmembrane region" description="Helical" evidence="1">
    <location>
        <begin position="17"/>
        <end position="37"/>
    </location>
</feature>
<feature type="transmembrane region" description="Helical" evidence="1">
    <location>
        <begin position="56"/>
        <end position="76"/>
    </location>
</feature>
<feature type="transmembrane region" description="Helical" evidence="1">
    <location>
        <begin position="111"/>
        <end position="131"/>
    </location>
</feature>
<feature type="transmembrane region" description="Helical" evidence="1">
    <location>
        <begin position="148"/>
        <end position="168"/>
    </location>
</feature>
<feature type="transmembrane region" description="Helical" evidence="1">
    <location>
        <begin position="180"/>
        <end position="200"/>
    </location>
</feature>
<feature type="transmembrane region" description="Helical" evidence="1">
    <location>
        <begin position="223"/>
        <end position="243"/>
    </location>
</feature>
<feature type="transmembrane region" description="Helical" evidence="1">
    <location>
        <begin position="261"/>
        <end position="281"/>
    </location>
</feature>
<feature type="transmembrane region" description="Helical" evidence="1">
    <location>
        <begin position="300"/>
        <end position="320"/>
    </location>
</feature>
<feature type="transmembrane region" description="Helical" evidence="1">
    <location>
        <begin position="355"/>
        <end position="375"/>
    </location>
</feature>
<feature type="transmembrane region" description="Helical" evidence="1">
    <location>
        <begin position="382"/>
        <end position="402"/>
    </location>
</feature>
<feature type="transmembrane region" description="Helical" evidence="1">
    <location>
        <begin position="434"/>
        <end position="454"/>
    </location>
</feature>
<feature type="transmembrane region" description="Helical" evidence="1">
    <location>
        <begin position="472"/>
        <end position="492"/>
    </location>
</feature>
<dbReference type="EMBL" id="AJ235271">
    <property type="protein sequence ID" value="CAA14839.1"/>
    <property type="molecule type" value="Genomic_DNA"/>
</dbReference>
<dbReference type="PIR" id="E71695">
    <property type="entry name" value="E71695"/>
</dbReference>
<dbReference type="RefSeq" id="NP_220763.1">
    <property type="nucleotide sequence ID" value="NC_000963.1"/>
</dbReference>
<dbReference type="RefSeq" id="WP_004597555.1">
    <property type="nucleotide sequence ID" value="NC_000963.1"/>
</dbReference>
<dbReference type="SMR" id="Q9ZDE9"/>
<dbReference type="STRING" id="272947.gene:17555462"/>
<dbReference type="EnsemblBacteria" id="CAA14839">
    <property type="protein sequence ID" value="CAA14839"/>
    <property type="gene ID" value="CAA14839"/>
</dbReference>
<dbReference type="KEGG" id="rpr:RP382"/>
<dbReference type="PATRIC" id="fig|272947.5.peg.392"/>
<dbReference type="eggNOG" id="COG0843">
    <property type="taxonomic scope" value="Bacteria"/>
</dbReference>
<dbReference type="HOGENOM" id="CLU_044559_0_0_5"/>
<dbReference type="OrthoDB" id="11275at2"/>
<dbReference type="Proteomes" id="UP000002480">
    <property type="component" value="Chromosome"/>
</dbReference>
<dbReference type="GO" id="GO:0005886">
    <property type="term" value="C:plasma membrane"/>
    <property type="evidence" value="ECO:0007669"/>
    <property type="project" value="UniProtKB-SubCell"/>
</dbReference>
<dbReference type="GO" id="GO:0004129">
    <property type="term" value="F:cytochrome-c oxidase activity"/>
    <property type="evidence" value="ECO:0007669"/>
    <property type="project" value="InterPro"/>
</dbReference>
<dbReference type="GO" id="GO:0020037">
    <property type="term" value="F:heme binding"/>
    <property type="evidence" value="ECO:0007669"/>
    <property type="project" value="InterPro"/>
</dbReference>
<dbReference type="GO" id="GO:0009060">
    <property type="term" value="P:aerobic respiration"/>
    <property type="evidence" value="ECO:0007669"/>
    <property type="project" value="InterPro"/>
</dbReference>
<dbReference type="Gene3D" id="1.20.210.10">
    <property type="entry name" value="Cytochrome c oxidase-like, subunit I domain"/>
    <property type="match status" value="1"/>
</dbReference>
<dbReference type="InterPro" id="IPR036927">
    <property type="entry name" value="Cyt_c_oxase-like_su1_sf"/>
</dbReference>
<dbReference type="InterPro" id="IPR000883">
    <property type="entry name" value="Cyt_C_Oxase_1"/>
</dbReference>
<dbReference type="Pfam" id="PF00115">
    <property type="entry name" value="COX1"/>
    <property type="match status" value="1"/>
</dbReference>
<dbReference type="SUPFAM" id="SSF81442">
    <property type="entry name" value="Cytochrome c oxidase subunit I-like"/>
    <property type="match status" value="1"/>
</dbReference>